<proteinExistence type="evidence at protein level"/>
<gene>
    <name type="primary">ftnA</name>
    <name type="synonym">pfr</name>
    <name type="ordered locus">HP_0653</name>
</gene>
<sequence>MLSKDIIKLLNEQVNKEMNSSNLYMSMSSWCYTHSLDGAGLFLFDHAAEEYEHAKKLIVFLNENNVPVQLTSISAPEHKFEGLTQIFQKAYEHEQHISESINNIVDHAIKGKDHATFNFLQWYVSEQHEEEVLFKDILDKIELIGNENHGLYLADQYVKGIAKSRKS</sequence>
<feature type="chain" id="PRO_0000201096" description="Bacterial non-heme ferritin">
    <location>
        <begin position="1"/>
        <end position="167"/>
    </location>
</feature>
<feature type="domain" description="Ferritin-like diiron" evidence="2">
    <location>
        <begin position="1"/>
        <end position="145"/>
    </location>
</feature>
<feature type="binding site" evidence="2">
    <location>
        <position position="17"/>
    </location>
    <ligand>
        <name>Fe cation</name>
        <dbReference type="ChEBI" id="CHEBI:24875"/>
        <label>1</label>
    </ligand>
</feature>
<feature type="binding site" evidence="2">
    <location>
        <position position="50"/>
    </location>
    <ligand>
        <name>Fe cation</name>
        <dbReference type="ChEBI" id="CHEBI:24875"/>
        <label>1</label>
    </ligand>
</feature>
<feature type="binding site" evidence="2">
    <location>
        <position position="50"/>
    </location>
    <ligand>
        <name>Fe cation</name>
        <dbReference type="ChEBI" id="CHEBI:24875"/>
        <label>2</label>
    </ligand>
</feature>
<feature type="binding site" evidence="2">
    <location>
        <position position="53"/>
    </location>
    <ligand>
        <name>Fe cation</name>
        <dbReference type="ChEBI" id="CHEBI:24875"/>
        <label>1</label>
    </ligand>
</feature>
<feature type="binding site" evidence="2">
    <location>
        <position position="94"/>
    </location>
    <ligand>
        <name>Fe cation</name>
        <dbReference type="ChEBI" id="CHEBI:24875"/>
        <label>2</label>
    </ligand>
</feature>
<feature type="binding site" evidence="2">
    <location>
        <position position="127"/>
    </location>
    <ligand>
        <name>Fe cation</name>
        <dbReference type="ChEBI" id="CHEBI:24875"/>
        <label>2</label>
    </ligand>
</feature>
<feature type="sequence conflict" description="In Ref. 1; AAB25329." evidence="4" ref="1">
    <original>A</original>
    <variation>S</variation>
    <location>
        <position position="39"/>
    </location>
</feature>
<feature type="helix" evidence="6">
    <location>
        <begin position="4"/>
        <end position="33"/>
    </location>
</feature>
<feature type="helix" evidence="6">
    <location>
        <begin position="37"/>
        <end position="63"/>
    </location>
</feature>
<feature type="helix" evidence="6">
    <location>
        <begin position="83"/>
        <end position="111"/>
    </location>
</feature>
<feature type="helix" evidence="6">
    <location>
        <begin position="114"/>
        <end position="144"/>
    </location>
</feature>
<feature type="strand" evidence="6">
    <location>
        <begin position="146"/>
        <end position="149"/>
    </location>
</feature>
<feature type="helix" evidence="6">
    <location>
        <begin position="150"/>
        <end position="163"/>
    </location>
</feature>
<organism>
    <name type="scientific">Helicobacter pylori (strain ATCC 700392 / 26695)</name>
    <name type="common">Campylobacter pylori</name>
    <dbReference type="NCBI Taxonomy" id="85962"/>
    <lineage>
        <taxon>Bacteria</taxon>
        <taxon>Pseudomonadati</taxon>
        <taxon>Campylobacterota</taxon>
        <taxon>Epsilonproteobacteria</taxon>
        <taxon>Campylobacterales</taxon>
        <taxon>Helicobacteraceae</taxon>
        <taxon>Helicobacter</taxon>
    </lineage>
</organism>
<protein>
    <recommendedName>
        <fullName>Bacterial non-heme ferritin</fullName>
        <ecNumber>1.16.3.2</ecNumber>
    </recommendedName>
</protein>
<reference key="1">
    <citation type="journal article" date="1993" name="J. Bacteriol.">
        <title>Paracrystalline inclusions of a novel ferritin containing nonheme iron, produced by the human gastric pathogen Helicobacter pylori: evidence for a third class of ferritins.</title>
        <authorList>
            <person name="Frazier B.A."/>
            <person name="Pfeifer J.D."/>
            <person name="Russell D.G."/>
            <person name="Falk P."/>
            <person name="Olsen A.N."/>
            <person name="Hammar M."/>
            <person name="Westblom T.U."/>
            <person name="Normark S.J."/>
        </authorList>
    </citation>
    <scope>NUCLEOTIDE SEQUENCE [GENOMIC DNA]</scope>
    <scope>PROTEIN SEQUENCE OF 1-25</scope>
    <source>
        <strain>DSM 4867 / CCUG 17874 / NCTC 11638</strain>
    </source>
</reference>
<reference key="2">
    <citation type="journal article" date="1997" name="Nature">
        <title>The complete genome sequence of the gastric pathogen Helicobacter pylori.</title>
        <authorList>
            <person name="Tomb J.-F."/>
            <person name="White O."/>
            <person name="Kerlavage A.R."/>
            <person name="Clayton R.A."/>
            <person name="Sutton G.G."/>
            <person name="Fleischmann R.D."/>
            <person name="Ketchum K.A."/>
            <person name="Klenk H.-P."/>
            <person name="Gill S.R."/>
            <person name="Dougherty B.A."/>
            <person name="Nelson K.E."/>
            <person name="Quackenbush J."/>
            <person name="Zhou L."/>
            <person name="Kirkness E.F."/>
            <person name="Peterson S.N."/>
            <person name="Loftus B.J."/>
            <person name="Richardson D.L."/>
            <person name="Dodson R.J."/>
            <person name="Khalak H.G."/>
            <person name="Glodek A."/>
            <person name="McKenney K."/>
            <person name="FitzGerald L.M."/>
            <person name="Lee N."/>
            <person name="Adams M.D."/>
            <person name="Hickey E.K."/>
            <person name="Berg D.E."/>
            <person name="Gocayne J.D."/>
            <person name="Utterback T.R."/>
            <person name="Peterson J.D."/>
            <person name="Kelley J.M."/>
            <person name="Cotton M.D."/>
            <person name="Weidman J.F."/>
            <person name="Fujii C."/>
            <person name="Bowman C."/>
            <person name="Watthey L."/>
            <person name="Wallin E."/>
            <person name="Hayes W.S."/>
            <person name="Borodovsky M."/>
            <person name="Karp P.D."/>
            <person name="Smith H.O."/>
            <person name="Fraser C.M."/>
            <person name="Venter J.C."/>
        </authorList>
    </citation>
    <scope>NUCLEOTIDE SEQUENCE [LARGE SCALE GENOMIC DNA]</scope>
    <source>
        <strain>ATCC 700392 / 26695</strain>
    </source>
</reference>
<reference key="3">
    <citation type="journal article" date="1992" name="J. Bacteriol.">
        <title>Production of a conserved adhesin by the human gastroduodenal pathogen Helicobacter pylori.</title>
        <authorList>
            <person name="Doig P."/>
            <person name="Austin J.W."/>
            <person name="Kostrzynska M."/>
            <person name="Trust T.J."/>
        </authorList>
    </citation>
    <scope>PROTEIN SEQUENCE OF 1-28</scope>
    <source>
        <strain>5294</strain>
        <strain>ATCC 43504 / NCTC 11637 / JCM 7653 / RPH 13487</strain>
        <strain>CCUG 915</strain>
    </source>
</reference>
<reference key="4">
    <citation type="journal article" date="1993" name="J. Bacteriol.">
        <title>The Helicobacter pylori 19.6-kilodalton protein is an iron-containing protein resembling ferritin.</title>
        <authorList>
            <person name="Doig P."/>
            <person name="Austin J.W."/>
            <person name="Trust T.J."/>
        </authorList>
    </citation>
    <scope>CHARACTERIZATION AS A FERRITIN</scope>
    <scope>SUBCELLULAR LOCATION</scope>
    <source>
        <strain>ATCC 43504 / NCTC 11637 / JCM 7653 / RPH 13487</strain>
    </source>
</reference>
<dbReference type="EC" id="1.16.3.2"/>
<dbReference type="EMBL" id="S54729">
    <property type="protein sequence ID" value="AAB25329.1"/>
    <property type="molecule type" value="Genomic_DNA"/>
</dbReference>
<dbReference type="EMBL" id="AE000511">
    <property type="protein sequence ID" value="AAD07712.1"/>
    <property type="molecule type" value="Genomic_DNA"/>
</dbReference>
<dbReference type="PIR" id="A49694">
    <property type="entry name" value="A49694"/>
</dbReference>
<dbReference type="RefSeq" id="NP_207447.1">
    <property type="nucleotide sequence ID" value="NC_000915.1"/>
</dbReference>
<dbReference type="RefSeq" id="WP_000949202.1">
    <property type="nucleotide sequence ID" value="NC_018939.1"/>
</dbReference>
<dbReference type="PDB" id="5U1B">
    <property type="method" value="X-ray"/>
    <property type="resolution" value="2.81 A"/>
    <property type="chains" value="A/B/C/D/E/F/G/H=1-167"/>
</dbReference>
<dbReference type="PDBsum" id="5U1B"/>
<dbReference type="SMR" id="P52093"/>
<dbReference type="DIP" id="DIP-3470N"/>
<dbReference type="FunCoup" id="P52093">
    <property type="interactions" value="154"/>
</dbReference>
<dbReference type="IntAct" id="P52093">
    <property type="interactions" value="6"/>
</dbReference>
<dbReference type="MINT" id="P52093"/>
<dbReference type="STRING" id="85962.HP_0653"/>
<dbReference type="PaxDb" id="85962-C694_03375"/>
<dbReference type="EnsemblBacteria" id="AAD07712">
    <property type="protein sequence ID" value="AAD07712"/>
    <property type="gene ID" value="HP_0653"/>
</dbReference>
<dbReference type="KEGG" id="heo:C694_03375"/>
<dbReference type="KEGG" id="hpy:HP_0653"/>
<dbReference type="PATRIC" id="fig|85962.47.peg.703"/>
<dbReference type="eggNOG" id="COG1528">
    <property type="taxonomic scope" value="Bacteria"/>
</dbReference>
<dbReference type="InParanoid" id="P52093"/>
<dbReference type="OrthoDB" id="9801481at2"/>
<dbReference type="PhylomeDB" id="P52093"/>
<dbReference type="Proteomes" id="UP000000429">
    <property type="component" value="Chromosome"/>
</dbReference>
<dbReference type="GO" id="GO:0005737">
    <property type="term" value="C:cytoplasm"/>
    <property type="evidence" value="ECO:0000318"/>
    <property type="project" value="GO_Central"/>
</dbReference>
<dbReference type="GO" id="GO:0005829">
    <property type="term" value="C:cytosol"/>
    <property type="evidence" value="ECO:0000318"/>
    <property type="project" value="GO_Central"/>
</dbReference>
<dbReference type="GO" id="GO:0008199">
    <property type="term" value="F:ferric iron binding"/>
    <property type="evidence" value="ECO:0000318"/>
    <property type="project" value="GO_Central"/>
</dbReference>
<dbReference type="GO" id="GO:0008198">
    <property type="term" value="F:ferrous iron binding"/>
    <property type="evidence" value="ECO:0000318"/>
    <property type="project" value="GO_Central"/>
</dbReference>
<dbReference type="GO" id="GO:0004322">
    <property type="term" value="F:ferroxidase activity"/>
    <property type="evidence" value="ECO:0000318"/>
    <property type="project" value="GO_Central"/>
</dbReference>
<dbReference type="GO" id="GO:0006879">
    <property type="term" value="P:intracellular iron ion homeostasis"/>
    <property type="evidence" value="ECO:0007669"/>
    <property type="project" value="UniProtKB-KW"/>
</dbReference>
<dbReference type="GO" id="GO:0006826">
    <property type="term" value="P:iron ion transport"/>
    <property type="evidence" value="ECO:0007669"/>
    <property type="project" value="InterPro"/>
</dbReference>
<dbReference type="CDD" id="cd01055">
    <property type="entry name" value="Nonheme_Ferritin"/>
    <property type="match status" value="1"/>
</dbReference>
<dbReference type="FunFam" id="1.20.1260.10:FF:000001">
    <property type="entry name" value="Non-heme ferritin"/>
    <property type="match status" value="1"/>
</dbReference>
<dbReference type="Gene3D" id="1.20.1260.10">
    <property type="match status" value="1"/>
</dbReference>
<dbReference type="InterPro" id="IPR001519">
    <property type="entry name" value="Ferritin"/>
</dbReference>
<dbReference type="InterPro" id="IPR012347">
    <property type="entry name" value="Ferritin-like"/>
</dbReference>
<dbReference type="InterPro" id="IPR009040">
    <property type="entry name" value="Ferritin-like_diiron"/>
</dbReference>
<dbReference type="InterPro" id="IPR009078">
    <property type="entry name" value="Ferritin-like_SF"/>
</dbReference>
<dbReference type="InterPro" id="IPR008331">
    <property type="entry name" value="Ferritin_DPS_dom"/>
</dbReference>
<dbReference type="InterPro" id="IPR041719">
    <property type="entry name" value="Ferritin_prok"/>
</dbReference>
<dbReference type="PANTHER" id="PTHR11431:SF127">
    <property type="entry name" value="BACTERIAL NON-HEME FERRITIN"/>
    <property type="match status" value="1"/>
</dbReference>
<dbReference type="PANTHER" id="PTHR11431">
    <property type="entry name" value="FERRITIN"/>
    <property type="match status" value="1"/>
</dbReference>
<dbReference type="Pfam" id="PF00210">
    <property type="entry name" value="Ferritin"/>
    <property type="match status" value="1"/>
</dbReference>
<dbReference type="SUPFAM" id="SSF47240">
    <property type="entry name" value="Ferritin-like"/>
    <property type="match status" value="1"/>
</dbReference>
<dbReference type="PROSITE" id="PS50905">
    <property type="entry name" value="FERRITIN_LIKE"/>
    <property type="match status" value="1"/>
</dbReference>
<evidence type="ECO:0000250" key="1"/>
<evidence type="ECO:0000255" key="2">
    <source>
        <dbReference type="PROSITE-ProRule" id="PRU00085"/>
    </source>
</evidence>
<evidence type="ECO:0000269" key="3">
    <source>
    </source>
</evidence>
<evidence type="ECO:0000305" key="4"/>
<evidence type="ECO:0000305" key="5">
    <source>
    </source>
</evidence>
<evidence type="ECO:0007829" key="6">
    <source>
        <dbReference type="PDB" id="5U1B"/>
    </source>
</evidence>
<keyword id="KW-0002">3D-structure</keyword>
<keyword id="KW-0963">Cytoplasm</keyword>
<keyword id="KW-0903">Direct protein sequencing</keyword>
<keyword id="KW-0408">Iron</keyword>
<keyword id="KW-0409">Iron storage</keyword>
<keyword id="KW-0479">Metal-binding</keyword>
<keyword id="KW-0560">Oxidoreductase</keyword>
<keyword id="KW-1185">Reference proteome</keyword>
<name>FTN_HELPY</name>
<accession>P52093</accession>
<comment type="function">
    <text>Iron-storage protein.</text>
</comment>
<comment type="catalytic activity">
    <reaction>
        <text>4 Fe(2+) + O2 + 6 H2O = 4 iron(III) oxide-hydroxide + 12 H(+)</text>
        <dbReference type="Rhea" id="RHEA:11972"/>
        <dbReference type="ChEBI" id="CHEBI:15377"/>
        <dbReference type="ChEBI" id="CHEBI:15378"/>
        <dbReference type="ChEBI" id="CHEBI:15379"/>
        <dbReference type="ChEBI" id="CHEBI:29033"/>
        <dbReference type="ChEBI" id="CHEBI:78619"/>
        <dbReference type="EC" id="1.16.3.2"/>
    </reaction>
</comment>
<comment type="subunit">
    <text evidence="1">Homooligomer of 24 subunits that assemble into a spherical protein shell (12 +/- 1 nM diameter) that can sequester at least 2000 iron atoms.</text>
</comment>
<comment type="subcellular location">
    <subcellularLocation>
        <location evidence="3">Cytoplasm</location>
    </subcellularLocation>
</comment>
<comment type="miscellaneous">
    <text evidence="5">Was originally thought to be an adhesin.</text>
</comment>
<comment type="miscellaneous">
    <text>In PubMed:1556073 only the sequence of residues 1-12 of strain 5294 was determined.</text>
</comment>
<comment type="similarity">
    <text evidence="4">Belongs to the ferritin family. Prokaryotic subfamily.</text>
</comment>